<feature type="chain" id="PRO_0000183432" description="Cytochrome c oxidase subunit 1">
    <location>
        <begin position="1"/>
        <end position="534"/>
    </location>
</feature>
<feature type="topological domain" description="Mitochondrial matrix" evidence="4">
    <location>
        <begin position="1"/>
        <end position="14"/>
    </location>
</feature>
<feature type="transmembrane region" description="Helical; Name=1" evidence="4">
    <location>
        <begin position="15"/>
        <end position="39"/>
    </location>
</feature>
<feature type="topological domain" description="Mitochondrial intermembrane" evidence="4">
    <location>
        <begin position="40"/>
        <end position="54"/>
    </location>
</feature>
<feature type="transmembrane region" description="Helical; Name=2" evidence="4">
    <location>
        <begin position="55"/>
        <end position="88"/>
    </location>
</feature>
<feature type="topological domain" description="Mitochondrial matrix" evidence="4">
    <location>
        <begin position="89"/>
        <end position="97"/>
    </location>
</feature>
<feature type="transmembrane region" description="Helical; Name=3" evidence="4">
    <location>
        <begin position="98"/>
        <end position="118"/>
    </location>
</feature>
<feature type="topological domain" description="Mitochondrial intermembrane" evidence="4">
    <location>
        <begin position="119"/>
        <end position="142"/>
    </location>
</feature>
<feature type="transmembrane region" description="Helical; Name=4" evidence="4">
    <location>
        <begin position="143"/>
        <end position="171"/>
    </location>
</feature>
<feature type="topological domain" description="Mitochondrial matrix" evidence="4">
    <location>
        <begin position="172"/>
        <end position="183"/>
    </location>
</feature>
<feature type="transmembrane region" description="Helical; Name=5" evidence="4">
    <location>
        <begin position="184"/>
        <end position="215"/>
    </location>
</feature>
<feature type="topological domain" description="Mitochondrial intermembrane" evidence="4">
    <location>
        <begin position="216"/>
        <end position="228"/>
    </location>
</feature>
<feature type="transmembrane region" description="Helical; Name=6" evidence="4">
    <location>
        <begin position="229"/>
        <end position="263"/>
    </location>
</feature>
<feature type="topological domain" description="Mitochondrial matrix" evidence="4">
    <location>
        <begin position="264"/>
        <end position="269"/>
    </location>
</feature>
<feature type="transmembrane region" description="Helical; Name=7" evidence="4">
    <location>
        <begin position="270"/>
        <end position="295"/>
    </location>
</feature>
<feature type="topological domain" description="Mitochondrial intermembrane" evidence="4">
    <location>
        <begin position="296"/>
        <end position="298"/>
    </location>
</feature>
<feature type="transmembrane region" description="Helical; Name=8" evidence="4">
    <location>
        <begin position="299"/>
        <end position="327"/>
    </location>
</feature>
<feature type="topological domain" description="Mitochondrial matrix" evidence="4">
    <location>
        <begin position="328"/>
        <end position="335"/>
    </location>
</feature>
<feature type="transmembrane region" description="Helical; Name=9" evidence="4">
    <location>
        <begin position="336"/>
        <end position="358"/>
    </location>
</feature>
<feature type="topological domain" description="Mitochondrial intermembrane" evidence="4">
    <location>
        <begin position="359"/>
        <end position="370"/>
    </location>
</feature>
<feature type="transmembrane region" description="Helical; Name=10" evidence="4">
    <location>
        <begin position="371"/>
        <end position="400"/>
    </location>
</feature>
<feature type="topological domain" description="Mitochondrial matrix" evidence="4">
    <location>
        <begin position="401"/>
        <end position="406"/>
    </location>
</feature>
<feature type="transmembrane region" description="Helical; Name=11" evidence="4">
    <location>
        <begin position="407"/>
        <end position="431"/>
    </location>
</feature>
<feature type="topological domain" description="Mitochondrial intermembrane" evidence="4">
    <location>
        <begin position="432"/>
        <end position="449"/>
    </location>
</feature>
<feature type="transmembrane region" description="Helical; Name=12" evidence="4">
    <location>
        <begin position="450"/>
        <end position="474"/>
    </location>
</feature>
<feature type="topological domain" description="Mitochondrial matrix" evidence="4">
    <location>
        <begin position="475"/>
        <end position="534"/>
    </location>
</feature>
<feature type="binding site" evidence="4 5">
    <location>
        <position position="39"/>
    </location>
    <ligand>
        <name>Ca(2+)</name>
        <dbReference type="ChEBI" id="CHEBI:29108"/>
    </ligand>
</feature>
<feature type="binding site" evidence="4 5">
    <location>
        <position position="42"/>
    </location>
    <ligand>
        <name>Ca(2+)</name>
        <dbReference type="ChEBI" id="CHEBI:29108"/>
    </ligand>
</feature>
<feature type="binding site" evidence="4 5">
    <location>
        <position position="44"/>
    </location>
    <ligand>
        <name>Ca(2+)</name>
        <dbReference type="ChEBI" id="CHEBI:29108"/>
    </ligand>
</feature>
<feature type="binding site" description="axial binding residue" evidence="4 5">
    <location>
        <position position="62"/>
    </location>
    <ligand>
        <name>Fe(II)-heme a</name>
        <dbReference type="ChEBI" id="CHEBI:61715"/>
        <note>low-spin</note>
    </ligand>
    <ligandPart>
        <name>Fe</name>
        <dbReference type="ChEBI" id="CHEBI:18248"/>
    </ligandPart>
</feature>
<feature type="binding site" evidence="4 5">
    <location>
        <position position="241"/>
    </location>
    <ligand>
        <name>Cu cation</name>
        <dbReference type="ChEBI" id="CHEBI:23378"/>
        <label>B</label>
    </ligand>
</feature>
<feature type="binding site" evidence="1">
    <location>
        <position position="245"/>
    </location>
    <ligand>
        <name>O2</name>
        <dbReference type="ChEBI" id="CHEBI:15379"/>
    </ligand>
</feature>
<feature type="binding site" evidence="4 5">
    <location>
        <position position="290"/>
    </location>
    <ligand>
        <name>Cu cation</name>
        <dbReference type="ChEBI" id="CHEBI:23378"/>
        <label>B</label>
    </ligand>
</feature>
<feature type="binding site" evidence="4 5">
    <location>
        <position position="291"/>
    </location>
    <ligand>
        <name>Cu cation</name>
        <dbReference type="ChEBI" id="CHEBI:23378"/>
        <label>B</label>
    </ligand>
</feature>
<feature type="binding site" evidence="4 5">
    <location>
        <position position="368"/>
    </location>
    <ligand>
        <name>Mg(2+)</name>
        <dbReference type="ChEBI" id="CHEBI:18420"/>
        <note>ligand shared with COX2</note>
    </ligand>
</feature>
<feature type="binding site" evidence="4 5">
    <location>
        <position position="369"/>
    </location>
    <ligand>
        <name>Mg(2+)</name>
        <dbReference type="ChEBI" id="CHEBI:18420"/>
        <note>ligand shared with COX2</note>
    </ligand>
</feature>
<feature type="binding site" description="axial binding residue" evidence="4">
    <location>
        <position position="376"/>
    </location>
    <ligand>
        <name>heme a3</name>
        <dbReference type="ChEBI" id="CHEBI:83282"/>
        <note>high-spin</note>
    </ligand>
    <ligandPart>
        <name>Fe</name>
        <dbReference type="ChEBI" id="CHEBI:18248"/>
    </ligandPart>
</feature>
<feature type="binding site" description="axial binding residue" evidence="4 5">
    <location>
        <position position="378"/>
    </location>
    <ligand>
        <name>Fe(II)-heme a</name>
        <dbReference type="ChEBI" id="CHEBI:61715"/>
        <note>low-spin</note>
    </ligand>
    <ligandPart>
        <name>Fe</name>
        <dbReference type="ChEBI" id="CHEBI:18248"/>
    </ligandPart>
</feature>
<feature type="binding site" evidence="4 5">
    <location>
        <position position="441"/>
    </location>
    <ligand>
        <name>Ca(2+)</name>
        <dbReference type="ChEBI" id="CHEBI:29108"/>
    </ligand>
</feature>
<feature type="cross-link" description="1'-histidyl-3'-tyrosine (His-Tyr)" evidence="4">
    <location>
        <begin position="241"/>
        <end position="245"/>
    </location>
</feature>
<feature type="sequence conflict" description="In Ref. 1; CAA24070." evidence="7" ref="1">
    <location>
        <position position="57"/>
    </location>
</feature>
<feature type="sequence conflict" description="In Ref. 1; CAA24070." evidence="7" ref="1">
    <original>F</original>
    <variation>CT</variation>
    <location>
        <position position="69"/>
    </location>
</feature>
<feature type="sequence conflict" description="In Ref. 1; CAA24070." evidence="7" ref="1">
    <original>S</original>
    <variation>A</variation>
    <location>
        <position position="224"/>
    </location>
</feature>
<feature type="sequence conflict" description="In Ref. 1; CAA24070." evidence="7" ref="1">
    <original>H</original>
    <variation>Y</variation>
    <location>
        <position position="328"/>
    </location>
</feature>
<feature type="sequence conflict" description="In Ref. 1; CAA24070." evidence="7" ref="1">
    <original>H</original>
    <variation>Y</variation>
    <location>
        <position position="378"/>
    </location>
</feature>
<feature type="sequence conflict" description="In Ref. 1; CAA24070." evidence="7" ref="1">
    <location>
        <begin position="479"/>
        <end position="485"/>
    </location>
</feature>
<feature type="sequence conflict" description="In Ref. 1; CAA24070." evidence="7" ref="1">
    <original>N</original>
    <variation>A</variation>
    <location>
        <position position="492"/>
    </location>
</feature>
<feature type="sequence conflict" description="In Ref. 1; CAA24070." evidence="7" ref="1">
    <location>
        <begin position="496"/>
        <end position="510"/>
    </location>
</feature>
<feature type="helix" evidence="15">
    <location>
        <begin position="2"/>
        <end position="5"/>
    </location>
</feature>
<feature type="helix" evidence="15">
    <location>
        <begin position="11"/>
        <end position="39"/>
    </location>
</feature>
<feature type="strand" evidence="15">
    <location>
        <begin position="41"/>
        <end position="44"/>
    </location>
</feature>
<feature type="strand" evidence="13">
    <location>
        <begin position="46"/>
        <end position="48"/>
    </location>
</feature>
<feature type="helix" evidence="15">
    <location>
        <begin position="52"/>
        <end position="68"/>
    </location>
</feature>
<feature type="helix" evidence="15">
    <location>
        <begin position="71"/>
        <end position="75"/>
    </location>
</feature>
<feature type="turn" evidence="15">
    <location>
        <begin position="76"/>
        <end position="78"/>
    </location>
</feature>
<feature type="helix" evidence="15">
    <location>
        <begin position="79"/>
        <end position="88"/>
    </location>
</feature>
<feature type="helix" evidence="15">
    <location>
        <begin position="96"/>
        <end position="117"/>
    </location>
</feature>
<feature type="strand" evidence="10">
    <location>
        <begin position="119"/>
        <end position="121"/>
    </location>
</feature>
<feature type="turn" evidence="11">
    <location>
        <begin position="126"/>
        <end position="129"/>
    </location>
</feature>
<feature type="turn" evidence="15">
    <location>
        <begin position="131"/>
        <end position="134"/>
    </location>
</feature>
<feature type="turn" evidence="15">
    <location>
        <begin position="136"/>
        <end position="138"/>
    </location>
</feature>
<feature type="helix" evidence="15">
    <location>
        <begin position="143"/>
        <end position="171"/>
    </location>
</feature>
<feature type="helix" evidence="15">
    <location>
        <begin position="179"/>
        <end position="181"/>
    </location>
</feature>
<feature type="helix" evidence="15">
    <location>
        <begin position="184"/>
        <end position="215"/>
    </location>
</feature>
<feature type="strand" evidence="14">
    <location>
        <begin position="220"/>
        <end position="222"/>
    </location>
</feature>
<feature type="turn" evidence="15">
    <location>
        <begin position="223"/>
        <end position="226"/>
    </location>
</feature>
<feature type="helix" evidence="15">
    <location>
        <begin position="229"/>
        <end position="261"/>
    </location>
</feature>
<feature type="turn" evidence="15">
    <location>
        <begin position="262"/>
        <end position="264"/>
    </location>
</feature>
<feature type="helix" evidence="15">
    <location>
        <begin position="270"/>
        <end position="283"/>
    </location>
</feature>
<feature type="helix" evidence="10">
    <location>
        <begin position="284"/>
        <end position="286"/>
    </location>
</feature>
<feature type="helix" evidence="15">
    <location>
        <begin position="288"/>
        <end position="291"/>
    </location>
</feature>
<feature type="strand" evidence="10">
    <location>
        <begin position="293"/>
        <end position="295"/>
    </location>
</feature>
<feature type="helix" evidence="15">
    <location>
        <begin position="299"/>
        <end position="310"/>
    </location>
</feature>
<feature type="helix" evidence="15">
    <location>
        <begin position="313"/>
        <end position="327"/>
    </location>
</feature>
<feature type="helix" evidence="15">
    <location>
        <begin position="336"/>
        <end position="358"/>
    </location>
</feature>
<feature type="helix" evidence="15">
    <location>
        <begin position="363"/>
        <end position="366"/>
    </location>
</feature>
<feature type="strand" evidence="15">
    <location>
        <begin position="367"/>
        <end position="370"/>
    </location>
</feature>
<feature type="helix" evidence="15">
    <location>
        <begin position="371"/>
        <end position="379"/>
    </location>
</feature>
<feature type="turn" evidence="15">
    <location>
        <begin position="380"/>
        <end position="384"/>
    </location>
</feature>
<feature type="helix" evidence="15">
    <location>
        <begin position="385"/>
        <end position="401"/>
    </location>
</feature>
<feature type="helix" evidence="15">
    <location>
        <begin position="407"/>
        <end position="425"/>
    </location>
</feature>
<feature type="helix" evidence="15">
    <location>
        <begin position="428"/>
        <end position="434"/>
    </location>
</feature>
<feature type="strand" evidence="15">
    <location>
        <begin position="437"/>
        <end position="439"/>
    </location>
</feature>
<feature type="helix" evidence="15">
    <location>
        <begin position="445"/>
        <end position="447"/>
    </location>
</feature>
<feature type="helix" evidence="15">
    <location>
        <begin position="448"/>
        <end position="478"/>
    </location>
</feature>
<feature type="helix" evidence="15">
    <location>
        <begin position="481"/>
        <end position="483"/>
    </location>
</feature>
<feature type="strand" evidence="15">
    <location>
        <begin position="485"/>
        <end position="488"/>
    </location>
</feature>
<feature type="strand" evidence="9">
    <location>
        <begin position="493"/>
        <end position="495"/>
    </location>
</feature>
<feature type="strand" evidence="10">
    <location>
        <begin position="497"/>
        <end position="499"/>
    </location>
</feature>
<feature type="helix" evidence="15">
    <location>
        <begin position="501"/>
        <end position="504"/>
    </location>
</feature>
<feature type="strand" evidence="9">
    <location>
        <begin position="507"/>
        <end position="509"/>
    </location>
</feature>
<feature type="helix" evidence="15">
    <location>
        <begin position="514"/>
        <end position="517"/>
    </location>
</feature>
<feature type="strand" evidence="12">
    <location>
        <begin position="524"/>
        <end position="526"/>
    </location>
</feature>
<evidence type="ECO:0000250" key="1">
    <source>
        <dbReference type="UniProtKB" id="P00396"/>
    </source>
</evidence>
<evidence type="ECO:0000269" key="2">
    <source>
    </source>
</evidence>
<evidence type="ECO:0000269" key="3">
    <source>
    </source>
</evidence>
<evidence type="ECO:0000269" key="4">
    <source>
    </source>
</evidence>
<evidence type="ECO:0000269" key="5">
    <source>
    </source>
</evidence>
<evidence type="ECO:0000269" key="6">
    <source>
    </source>
</evidence>
<evidence type="ECO:0000305" key="7"/>
<evidence type="ECO:0000305" key="8">
    <source>
    </source>
</evidence>
<evidence type="ECO:0007829" key="9">
    <source>
        <dbReference type="PDB" id="6GIQ"/>
    </source>
</evidence>
<evidence type="ECO:0007829" key="10">
    <source>
        <dbReference type="PDB" id="6T0B"/>
    </source>
</evidence>
<evidence type="ECO:0007829" key="11">
    <source>
        <dbReference type="PDB" id="6YMX"/>
    </source>
</evidence>
<evidence type="ECO:0007829" key="12">
    <source>
        <dbReference type="PDB" id="6YMY"/>
    </source>
</evidence>
<evidence type="ECO:0007829" key="13">
    <source>
        <dbReference type="PDB" id="8DH6"/>
    </source>
</evidence>
<evidence type="ECO:0007829" key="14">
    <source>
        <dbReference type="PDB" id="8E7S"/>
    </source>
</evidence>
<evidence type="ECO:0007829" key="15">
    <source>
        <dbReference type="PDB" id="9ETZ"/>
    </source>
</evidence>
<keyword id="KW-0002">3D-structure</keyword>
<keyword id="KW-0186">Copper</keyword>
<keyword id="KW-0249">Electron transport</keyword>
<keyword id="KW-0349">Heme</keyword>
<keyword id="KW-0408">Iron</keyword>
<keyword id="KW-0472">Membrane</keyword>
<keyword id="KW-0479">Metal-binding</keyword>
<keyword id="KW-0496">Mitochondrion</keyword>
<keyword id="KW-0999">Mitochondrion inner membrane</keyword>
<keyword id="KW-1185">Reference proteome</keyword>
<keyword id="KW-0679">Respiratory chain</keyword>
<keyword id="KW-1278">Translocase</keyword>
<keyword id="KW-0812">Transmembrane</keyword>
<keyword id="KW-1133">Transmembrane helix</keyword>
<keyword id="KW-0813">Transport</keyword>
<proteinExistence type="evidence at protein level"/>
<comment type="function">
    <text evidence="4 8">Component of the cytochrome c oxidase, the last enzyme in the mitochondrial electron transport chain which drives oxidative phosphorylation. The respiratory chain contains 3 multisubunit complexes succinate dehydrogenase (complex II, CII), ubiquinol-cytochrome c oxidoreductase (cytochrome b-c1 complex, complex III, CIII) and cytochrome c oxidase (complex IV, CIV), that cooperate to transfer electrons derived from NADH and succinate to molecular oxygen, creating an electrochemical gradient over the inner membrane that drives transmembrane transport and the ATP synthase. Cytochrome c oxidase is the component of the respiratory chain that catalyzes the reduction of oxygen to water. Electrons originating from reduced cytochrome c in the intermembrane space (IMS) are transferred via the dinuclear copper A center (CU(A)) of COX2 and heme A of COX1 to the active site in COX1, a binuclear center (BNC) formed by heme A3 and copper B (CU(B)). The BNC reduces molecular oxygen to 2 water molecules using 4 electrons from cytochrome c in the IMS and 4 protons from the mitochondrial matrix (Probable). COX1 is a catalytic core subunit containing heme A and the active site BNC with heme A3 and the copper atom CU(B) (PubMed:30598554).</text>
</comment>
<comment type="catalytic activity">
    <reaction evidence="4">
        <text>4 Fe(II)-[cytochrome c] + O2 + 8 H(+)(in) = 4 Fe(III)-[cytochrome c] + 2 H2O + 4 H(+)(out)</text>
        <dbReference type="Rhea" id="RHEA:11436"/>
        <dbReference type="Rhea" id="RHEA-COMP:10350"/>
        <dbReference type="Rhea" id="RHEA-COMP:14399"/>
        <dbReference type="ChEBI" id="CHEBI:15377"/>
        <dbReference type="ChEBI" id="CHEBI:15378"/>
        <dbReference type="ChEBI" id="CHEBI:15379"/>
        <dbReference type="ChEBI" id="CHEBI:29033"/>
        <dbReference type="ChEBI" id="CHEBI:29034"/>
        <dbReference type="EC" id="7.1.1.9"/>
    </reaction>
    <physiologicalReaction direction="left-to-right" evidence="4">
        <dbReference type="Rhea" id="RHEA:11437"/>
    </physiologicalReaction>
</comment>
<comment type="cofactor">
    <cofactor evidence="4 5">
        <name>heme</name>
        <dbReference type="ChEBI" id="CHEBI:30413"/>
    </cofactor>
    <text evidence="4 5">Binds 2 heme A groups non-covalently per subunit.</text>
</comment>
<comment type="cofactor">
    <cofactor>
        <name>Cu cation</name>
        <dbReference type="ChEBI" id="CHEBI:23378"/>
    </cofactor>
    <text evidence="4 5">Binds a copper B center.</text>
</comment>
<comment type="pathway">
    <text>Energy metabolism; oxidative phosphorylation.</text>
</comment>
<comment type="subunit">
    <text evidence="2 3 4 5 6">Component of the cytochrome c oxidase (complex IV, CIV), a multisubunit enzyme composed of 12 subunits. The complex is composed of a catalytic core of 3 subunits COX1, COX2 and COX3, encoded in the mitochondrial DNA, and 9 supernumerary subunits COX4, COX5A (or COX5B), COX6, COX7, COX8, COX9, COX12, COX13 and COX26, which are encoded in the nuclear genome (PubMed:30598554, PubMed:30598556, PubMed:7851399). The complex exists as a monomer or a dimer and forms supercomplexes (SCs) in the inner mitochondrial membrane with a dimer of ubiquinol-cytochrome c oxidoreductase (cytochrome b-c1 complex, complex III, CIII), resulting in 2 different assemblies (supercomplexes III(2)IV and III(2)IV(2)) (PubMed:10764779, PubMed:10775262, PubMed:30598554, PubMed:30598556).</text>
</comment>
<comment type="interaction">
    <interactant intactId="EBI-2435921">
        <id>P00401</id>
    </interactant>
    <interactant intactId="EBI-19922">
        <id>P07256</id>
        <label>COR1</label>
    </interactant>
    <organismsDiffer>false</organismsDiffer>
    <experiments>2</experiments>
</comment>
<comment type="subcellular location">
    <subcellularLocation>
        <location evidence="4">Mitochondrion inner membrane</location>
        <topology evidence="4">Multi-pass membrane protein</topology>
    </subcellularLocation>
</comment>
<comment type="PTM">
    <text evidence="6">The N-terminus is blocked.</text>
</comment>
<comment type="similarity">
    <text evidence="7">Belongs to the heme-copper respiratory oxidase family.</text>
</comment>
<protein>
    <recommendedName>
        <fullName>Cytochrome c oxidase subunit 1</fullName>
        <ecNumber evidence="4">7.1.1.9</ecNumber>
    </recommendedName>
    <alternativeName>
        <fullName>Cytochrome c oxidase polypeptide I</fullName>
    </alternativeName>
</protein>
<organism>
    <name type="scientific">Saccharomyces cerevisiae (strain ATCC 204508 / S288c)</name>
    <name type="common">Baker's yeast</name>
    <dbReference type="NCBI Taxonomy" id="559292"/>
    <lineage>
        <taxon>Eukaryota</taxon>
        <taxon>Fungi</taxon>
        <taxon>Dikarya</taxon>
        <taxon>Ascomycota</taxon>
        <taxon>Saccharomycotina</taxon>
        <taxon>Saccharomycetes</taxon>
        <taxon>Saccharomycetales</taxon>
        <taxon>Saccharomycetaceae</taxon>
        <taxon>Saccharomyces</taxon>
    </lineage>
</organism>
<dbReference type="EC" id="7.1.1.9" evidence="4"/>
<dbReference type="EMBL" id="V00694">
    <property type="protein sequence ID" value="CAA24070.1"/>
    <property type="molecule type" value="Genomic_DNA"/>
</dbReference>
<dbReference type="EMBL" id="KP263414">
    <property type="protein sequence ID" value="AIZ98881.1"/>
    <property type="molecule type" value="Genomic_DNA"/>
</dbReference>
<dbReference type="EMBL" id="X14910">
    <property type="protein sequence ID" value="CAA33036.1"/>
    <property type="molecule type" value="Genomic_DNA"/>
</dbReference>
<dbReference type="PIR" id="A00468">
    <property type="entry name" value="ODBY1"/>
</dbReference>
<dbReference type="PIR" id="S78640">
    <property type="entry name" value="S78640"/>
</dbReference>
<dbReference type="RefSeq" id="NP_009305.1">
    <property type="nucleotide sequence ID" value="NC_001224.1"/>
</dbReference>
<dbReference type="PDB" id="6GIQ">
    <property type="method" value="EM"/>
    <property type="resolution" value="3.23 A"/>
    <property type="chains" value="a=1-534"/>
</dbReference>
<dbReference type="PDB" id="6HU9">
    <property type="method" value="EM"/>
    <property type="resolution" value="3.35 A"/>
    <property type="chains" value="a/m=1-534"/>
</dbReference>
<dbReference type="PDB" id="6T0B">
    <property type="method" value="EM"/>
    <property type="resolution" value="2.80 A"/>
    <property type="chains" value="a/n=1-534"/>
</dbReference>
<dbReference type="PDB" id="6T15">
    <property type="method" value="EM"/>
    <property type="resolution" value="3.29 A"/>
    <property type="chains" value="a=1-534"/>
</dbReference>
<dbReference type="PDB" id="6YMX">
    <property type="method" value="EM"/>
    <property type="resolution" value="3.17 A"/>
    <property type="chains" value="a=5-534"/>
</dbReference>
<dbReference type="PDB" id="6YMY">
    <property type="method" value="EM"/>
    <property type="resolution" value="3.41 A"/>
    <property type="chains" value="a=5-534"/>
</dbReference>
<dbReference type="PDB" id="7Z10">
    <property type="method" value="EM"/>
    <property type="resolution" value="3.87 A"/>
    <property type="chains" value="a=1-534"/>
</dbReference>
<dbReference type="PDB" id="8DH6">
    <property type="method" value="EM"/>
    <property type="resolution" value="2.94 A"/>
    <property type="chains" value="a=1-534"/>
</dbReference>
<dbReference type="PDB" id="8E7S">
    <property type="method" value="EM"/>
    <property type="resolution" value="3.20 A"/>
    <property type="chains" value="K/k=1-534"/>
</dbReference>
<dbReference type="PDB" id="8EC0">
    <property type="method" value="EM"/>
    <property type="resolution" value="3.30 A"/>
    <property type="chains" value="K=1-534"/>
</dbReference>
<dbReference type="PDB" id="9ETZ">
    <property type="method" value="EM"/>
    <property type="resolution" value="2.40 A"/>
    <property type="chains" value="a=1-534"/>
</dbReference>
<dbReference type="PDBsum" id="6GIQ"/>
<dbReference type="PDBsum" id="6HU9"/>
<dbReference type="PDBsum" id="6T0B"/>
<dbReference type="PDBsum" id="6T15"/>
<dbReference type="PDBsum" id="6YMX"/>
<dbReference type="PDBsum" id="6YMY"/>
<dbReference type="PDBsum" id="7Z10"/>
<dbReference type="PDBsum" id="8DH6"/>
<dbReference type="PDBsum" id="8E7S"/>
<dbReference type="PDBsum" id="8EC0"/>
<dbReference type="PDBsum" id="9ETZ"/>
<dbReference type="EMDB" id="EMD-0004"/>
<dbReference type="EMDB" id="EMD-10318"/>
<dbReference type="EMDB" id="EMD-10334"/>
<dbReference type="EMDB" id="EMD-10335"/>
<dbReference type="EMDB" id="EMD-10340"/>
<dbReference type="EMDB" id="EMD-10375"/>
<dbReference type="EMDB" id="EMD-10376"/>
<dbReference type="EMDB" id="EMD-10847"/>
<dbReference type="EMDB" id="EMD-10848"/>
<dbReference type="EMDB" id="EMD-14436"/>
<dbReference type="EMDB" id="EMD-19963"/>
<dbReference type="EMDB" id="EMD-27430"/>
<dbReference type="EMDB" id="EMD-27940"/>
<dbReference type="EMDB" id="EMD-28011"/>
<dbReference type="SMR" id="P00401"/>
<dbReference type="BioGRID" id="34790">
    <property type="interactions" value="75"/>
</dbReference>
<dbReference type="ComplexPortal" id="CPX-1721">
    <property type="entry name" value="Mitochondrial respiratory chain complex IV, COX5A variant"/>
</dbReference>
<dbReference type="ComplexPortal" id="CPX-1722">
    <property type="entry name" value="Mitochondrial respiratory chain complex IV, COX5B variant"/>
</dbReference>
<dbReference type="FunCoup" id="P00401">
    <property type="interactions" value="728"/>
</dbReference>
<dbReference type="IntAct" id="P00401">
    <property type="interactions" value="19"/>
</dbReference>
<dbReference type="MINT" id="P00401"/>
<dbReference type="STRING" id="4932.Q0045"/>
<dbReference type="TCDB" id="3.D.4.8.1">
    <property type="family name" value="the proton-translocating cytochrome oxidase (cox) superfamily"/>
</dbReference>
<dbReference type="PaxDb" id="4932-Q0045"/>
<dbReference type="PeptideAtlas" id="P00401"/>
<dbReference type="EnsemblFungi" id="Q0045_mRNA">
    <property type="protein sequence ID" value="Q0045"/>
    <property type="gene ID" value="Q0045"/>
</dbReference>
<dbReference type="GeneID" id="854598"/>
<dbReference type="KEGG" id="sce:Q0045"/>
<dbReference type="AGR" id="SGD:S000007260"/>
<dbReference type="SGD" id="S000007260">
    <property type="gene designation" value="COX1"/>
</dbReference>
<dbReference type="VEuPathDB" id="FungiDB:Q0045"/>
<dbReference type="eggNOG" id="KOG4769">
    <property type="taxonomic scope" value="Eukaryota"/>
</dbReference>
<dbReference type="GeneTree" id="ENSGT00390000001518"/>
<dbReference type="HOGENOM" id="CLU_011899_7_3_1"/>
<dbReference type="InParanoid" id="P00401"/>
<dbReference type="OMA" id="WAMMSIG"/>
<dbReference type="OrthoDB" id="4905839at2759"/>
<dbReference type="BioCyc" id="MetaCyc:Q0045-MONOMER"/>
<dbReference type="BioCyc" id="YEAST:Q0045-MONOMER"/>
<dbReference type="Reactome" id="R-SCE-9837999">
    <property type="pathway name" value="Mitochondrial protein degradation"/>
</dbReference>
<dbReference type="UniPathway" id="UPA00705"/>
<dbReference type="BioGRID-ORCS" id="854598">
    <property type="hits" value="0 hits in 10 CRISPR screens"/>
</dbReference>
<dbReference type="PRO" id="PR:P00401"/>
<dbReference type="Proteomes" id="UP000002311">
    <property type="component" value="Mitochondrion"/>
</dbReference>
<dbReference type="RNAct" id="P00401">
    <property type="molecule type" value="protein"/>
</dbReference>
<dbReference type="GO" id="GO:0005743">
    <property type="term" value="C:mitochondrial inner membrane"/>
    <property type="evidence" value="ECO:0007669"/>
    <property type="project" value="UniProtKB-SubCell"/>
</dbReference>
<dbReference type="GO" id="GO:0031966">
    <property type="term" value="C:mitochondrial membrane"/>
    <property type="evidence" value="ECO:0000314"/>
    <property type="project" value="ComplexPortal"/>
</dbReference>
<dbReference type="GO" id="GO:0005739">
    <property type="term" value="C:mitochondrion"/>
    <property type="evidence" value="ECO:0007005"/>
    <property type="project" value="SGD"/>
</dbReference>
<dbReference type="GO" id="GO:0045277">
    <property type="term" value="C:respiratory chain complex IV"/>
    <property type="evidence" value="ECO:0000314"/>
    <property type="project" value="SGD"/>
</dbReference>
<dbReference type="GO" id="GO:0004129">
    <property type="term" value="F:cytochrome-c oxidase activity"/>
    <property type="evidence" value="ECO:0007669"/>
    <property type="project" value="UniProtKB-EC"/>
</dbReference>
<dbReference type="GO" id="GO:0020037">
    <property type="term" value="F:heme binding"/>
    <property type="evidence" value="ECO:0007669"/>
    <property type="project" value="InterPro"/>
</dbReference>
<dbReference type="GO" id="GO:0046872">
    <property type="term" value="F:metal ion binding"/>
    <property type="evidence" value="ECO:0007669"/>
    <property type="project" value="UniProtKB-KW"/>
</dbReference>
<dbReference type="GO" id="GO:0009060">
    <property type="term" value="P:aerobic respiration"/>
    <property type="evidence" value="ECO:0000315"/>
    <property type="project" value="SGD"/>
</dbReference>
<dbReference type="GO" id="GO:0045333">
    <property type="term" value="P:cellular respiration"/>
    <property type="evidence" value="ECO:0000314"/>
    <property type="project" value="ComplexPortal"/>
</dbReference>
<dbReference type="GO" id="GO:0006123">
    <property type="term" value="P:mitochondrial electron transport, cytochrome c to oxygen"/>
    <property type="evidence" value="ECO:0000314"/>
    <property type="project" value="SGD"/>
</dbReference>
<dbReference type="GO" id="GO:0022904">
    <property type="term" value="P:respiratory electron transport chain"/>
    <property type="evidence" value="ECO:0000318"/>
    <property type="project" value="GO_Central"/>
</dbReference>
<dbReference type="CDD" id="cd01663">
    <property type="entry name" value="Cyt_c_Oxidase_I"/>
    <property type="match status" value="1"/>
</dbReference>
<dbReference type="FunFam" id="1.20.210.10:FF:000001">
    <property type="entry name" value="Cytochrome c oxidase subunit 1"/>
    <property type="match status" value="1"/>
</dbReference>
<dbReference type="Gene3D" id="1.20.210.10">
    <property type="entry name" value="Cytochrome c oxidase-like, subunit I domain"/>
    <property type="match status" value="1"/>
</dbReference>
<dbReference type="InterPro" id="IPR023616">
    <property type="entry name" value="Cyt_c_oxase-like_su1_dom"/>
</dbReference>
<dbReference type="InterPro" id="IPR036927">
    <property type="entry name" value="Cyt_c_oxase-like_su1_sf"/>
</dbReference>
<dbReference type="InterPro" id="IPR000883">
    <property type="entry name" value="Cyt_C_Oxase_1"/>
</dbReference>
<dbReference type="InterPro" id="IPR023615">
    <property type="entry name" value="Cyt_c_Oxase_su1_BS"/>
</dbReference>
<dbReference type="InterPro" id="IPR033944">
    <property type="entry name" value="Cyt_c_oxase_su1_dom"/>
</dbReference>
<dbReference type="PANTHER" id="PTHR10422">
    <property type="entry name" value="CYTOCHROME C OXIDASE SUBUNIT 1"/>
    <property type="match status" value="1"/>
</dbReference>
<dbReference type="PANTHER" id="PTHR10422:SF18">
    <property type="entry name" value="CYTOCHROME C OXIDASE SUBUNIT 1"/>
    <property type="match status" value="1"/>
</dbReference>
<dbReference type="Pfam" id="PF00115">
    <property type="entry name" value="COX1"/>
    <property type="match status" value="1"/>
</dbReference>
<dbReference type="PRINTS" id="PR01165">
    <property type="entry name" value="CYCOXIDASEI"/>
</dbReference>
<dbReference type="SUPFAM" id="SSF81442">
    <property type="entry name" value="Cytochrome c oxidase subunit I-like"/>
    <property type="match status" value="1"/>
</dbReference>
<dbReference type="PROSITE" id="PS50855">
    <property type="entry name" value="COX1"/>
    <property type="match status" value="1"/>
</dbReference>
<dbReference type="PROSITE" id="PS00077">
    <property type="entry name" value="COX1_CUB"/>
    <property type="match status" value="1"/>
</dbReference>
<accession>P00401</accession>
<accession>A0A0A7NYF6</accession>
<accession>Q9ZZX6</accession>
<sequence length="534" mass="58798">MVQRWLYSTNAKDIAVLYFMLAIFSGMAGTAMSLIIRLELAAPGSQYLHGNSQLFNVLVVGHAVLMIFFLVMPALIGGFGNYLLPLMIGATDTAFPRINNIAFWVLPMGLVCLVTSTLVESGAGTGWTVYPPLSSIQAHSGPSVDLAIFALHLTSISSLLGAINFIVTTLNMRTNGMTMHKLPLFVWSIFITAFLLLLSLPVLSAGITMLLLDRNFNTSFFEVSGGGDPILYEHLFWFFGHPEVYILIIPGFGIISHVVSTYSKKPVFGEISMVYAMASIGLLGFLVWSHHMYIVGLDADTRAYFTSATMIIAIPTGIKIFSWLATIHGGSIRLATPMLYAIAFLFLFTMGGLTGVALANASLDVAFHDTYYVVGHFHYVLSMGAIFSLFAGYYYWSPQILGLNYNEKLAQIQFWLIFIGANVIFFPMHFLGINGMPRRIPDYPDAFAGWNYVASIGSFIATLSLFLFIYILYDQLVNGLNNKVNNKSVIYNKAPDFVESNTIFNLNTVKSSSIEFLLTSPPAVHSFNTPAVQS</sequence>
<reference key="1">
    <citation type="journal article" date="1980" name="J. Biol. Chem.">
        <title>Assembly of the mitochondrial membrane system. Structure and nucleotide sequence of the gene coding for subunit 1 of yeast cytochrome oxidase.</title>
        <authorList>
            <person name="Bonitz S.G."/>
            <person name="Coruzzi G."/>
            <person name="Thalenfeld B.E."/>
            <person name="Tzagoloff A."/>
            <person name="Macino G."/>
        </authorList>
    </citation>
    <scope>NUCLEOTIDE SEQUENCE [GENOMIC DNA]</scope>
    <source>
        <strain>ATCC 24657 / D273-10B</strain>
    </source>
</reference>
<reference key="2">
    <citation type="journal article" date="1998" name="FEBS Lett.">
        <title>The complete sequence of the mitochondrial genome of Saccharomyces cerevisiae.</title>
        <authorList>
            <person name="Foury F."/>
            <person name="Roganti T."/>
            <person name="Lecrenier N."/>
            <person name="Purnelle B."/>
        </authorList>
    </citation>
    <scope>NUCLEOTIDE SEQUENCE [LARGE SCALE GENOMIC DNA]</scope>
    <source>
        <strain>ATCC 96604 / S288c / FY1679</strain>
    </source>
</reference>
<reference key="3">
    <citation type="journal article" date="2014" name="G3 (Bethesda)">
        <title>The reference genome sequence of Saccharomyces cerevisiae: Then and now.</title>
        <authorList>
            <person name="Engel S.R."/>
            <person name="Dietrich F.S."/>
            <person name="Fisk D.G."/>
            <person name="Binkley G."/>
            <person name="Balakrishnan R."/>
            <person name="Costanzo M.C."/>
            <person name="Dwight S.S."/>
            <person name="Hitz B.C."/>
            <person name="Karra K."/>
            <person name="Nash R.S."/>
            <person name="Weng S."/>
            <person name="Wong E.D."/>
            <person name="Lloyd P."/>
            <person name="Skrzypek M.S."/>
            <person name="Miyasato S.R."/>
            <person name="Simison M."/>
            <person name="Cherry J.M."/>
        </authorList>
    </citation>
    <scope>GENOME REANNOTATION</scope>
    <source>
        <strain>ATCC 96604 / S288c / FY1679</strain>
    </source>
</reference>
<reference key="4">
    <citation type="journal article" date="1989" name="Nucleic Acids Res.">
        <title>Sequence of the yeast mitochondrial OX13/OL12 promoter region.</title>
        <authorList>
            <person name="Seraphin B."/>
            <person name="Simon M."/>
            <person name="Jacq C."/>
            <person name="Faye G."/>
        </authorList>
    </citation>
    <scope>NUCLEOTIDE SEQUENCE [GENOMIC DNA] OF 1-56</scope>
    <source>
        <strain>ATCC 24657 / D273-10B</strain>
    </source>
</reference>
<reference key="5">
    <citation type="journal article" date="1992" name="J. Biol. Chem.">
        <title>Purification of yeast cytochrome c oxidase with a subunit composition resembling the mammalian enzyme.</title>
        <authorList>
            <person name="Taanman J.-W."/>
            <person name="Capaldi R.A."/>
        </authorList>
    </citation>
    <scope>COMPOSITION OF THE CYTOCHROME C OXIDASE COMPLEX</scope>
</reference>
<reference key="6">
    <citation type="journal article" date="1995" name="Eur. J. Biochem.">
        <title>Kinetic properties and ligand binding of the eleven-subunit cytochrome-c oxidase from Saccharomyces cerevisiae isolated with a novel large-scale purification method.</title>
        <authorList>
            <person name="Geier B.M."/>
            <person name="Schagger H."/>
            <person name="Ortwein C."/>
            <person name="Link T.A."/>
            <person name="Hagen W.R."/>
            <person name="Brandt U."/>
            <person name="Von Jagow G."/>
        </authorList>
    </citation>
    <scope>COMPOSITION OF THE CYTOCHROME C OXIDASE COMPLEX</scope>
    <scope>BLOCKED N-TERMINUS</scope>
</reference>
<reference key="7">
    <citation type="journal article" date="2000" name="EMBO J.">
        <title>Supercomplexes in the respiratory chains of yeast and mammalian mitochondria.</title>
        <authorList>
            <person name="Schaegger H."/>
            <person name="Pfeiffer K."/>
        </authorList>
    </citation>
    <scope>FORMATION OF CYTOCHROME BC1-CYTOCHROME C OXIDASE SUPERCOMPLEX</scope>
</reference>
<reference key="8">
    <citation type="journal article" date="2000" name="J. Biol. Chem.">
        <title>The cytochrome bc1 and cytochrome c oxidase complexes associate to form a single supracomplex in yeast mitochondria.</title>
        <authorList>
            <person name="Cruciat C.M."/>
            <person name="Brunner S."/>
            <person name="Baumann F."/>
            <person name="Neupert W."/>
            <person name="Stuart R.A."/>
        </authorList>
    </citation>
    <scope>FORMATION OF CYTOCHROME BC1-CYTOCHROME C OXIDASE SUPERCOMPLEX</scope>
</reference>
<reference key="9">
    <citation type="journal article" date="2019" name="Nat. Struct. Mol. Biol.">
        <title>Cryo-EM structure of the yeast respiratory supercomplex.</title>
        <authorList>
            <person name="Rathore S."/>
            <person name="Berndtsson J."/>
            <person name="Marin-Buera L."/>
            <person name="Conrad J."/>
            <person name="Carroni M."/>
            <person name="Brzezinski P."/>
            <person name="Ott M."/>
        </authorList>
    </citation>
    <scope>STRUCTURE BY ELECTRON MICROSCOPY (3.23 ANGSTROMS) IN COMPLEX WITH COPPER AND HEME</scope>
</reference>
<reference key="10">
    <citation type="journal article" date="2019" name="Nat. Struct. Mol. Biol.">
        <title>Structure of yeast cytochrome c oxidase in a supercomplex with cytochrome bc1.</title>
        <authorList>
            <person name="Hartley A.M."/>
            <person name="Lukoyanova N."/>
            <person name="Zhang Y."/>
            <person name="Cabrera-Orefice A."/>
            <person name="Arnold S."/>
            <person name="Meunier B."/>
            <person name="Pinotsis N."/>
            <person name="Marechal A."/>
        </authorList>
    </citation>
    <scope>STRUCTURE BY ELECTRON MICROSCOPY (3.35 ANGSTROMS) IN COMPLEX WITH COPPER; MAGNESIUM; CALCIUM AND HEME</scope>
    <scope>COVALENT BOND</scope>
    <scope>FUNCTION</scope>
    <scope>CATALYTIC ACTIVITY</scope>
</reference>
<name>COX1_YEAST</name>
<geneLocation type="mitochondrion"/>
<gene>
    <name type="primary">COX1</name>
    <name type="synonym">OXI3</name>
    <name type="ordered locus">Q0045</name>
</gene>